<protein>
    <recommendedName>
        <fullName evidence="1">Homoserine kinase</fullName>
        <shortName evidence="1">HK</shortName>
        <shortName evidence="1">HSK</shortName>
        <ecNumber evidence="1">2.7.1.39</ecNumber>
    </recommendedName>
</protein>
<reference key="1">
    <citation type="journal article" date="2002" name="Proc. Natl. Acad. Sci. U.S.A.">
        <title>Extensive mosaic structure revealed by the complete genome sequence of uropathogenic Escherichia coli.</title>
        <authorList>
            <person name="Welch R.A."/>
            <person name="Burland V."/>
            <person name="Plunkett G. III"/>
            <person name="Redford P."/>
            <person name="Roesch P."/>
            <person name="Rasko D."/>
            <person name="Buckles E.L."/>
            <person name="Liou S.-R."/>
            <person name="Boutin A."/>
            <person name="Hackett J."/>
            <person name="Stroud D."/>
            <person name="Mayhew G.F."/>
            <person name="Rose D.J."/>
            <person name="Zhou S."/>
            <person name="Schwartz D.C."/>
            <person name="Perna N.T."/>
            <person name="Mobley H.L.T."/>
            <person name="Donnenberg M.S."/>
            <person name="Blattner F.R."/>
        </authorList>
    </citation>
    <scope>NUCLEOTIDE SEQUENCE [LARGE SCALE GENOMIC DNA]</scope>
    <source>
        <strain>CFT073 / ATCC 700928 / UPEC</strain>
    </source>
</reference>
<organism>
    <name type="scientific">Escherichia coli O6:H1 (strain CFT073 / ATCC 700928 / UPEC)</name>
    <dbReference type="NCBI Taxonomy" id="199310"/>
    <lineage>
        <taxon>Bacteria</taxon>
        <taxon>Pseudomonadati</taxon>
        <taxon>Pseudomonadota</taxon>
        <taxon>Gammaproteobacteria</taxon>
        <taxon>Enterobacterales</taxon>
        <taxon>Enterobacteriaceae</taxon>
        <taxon>Escherichia</taxon>
    </lineage>
</organism>
<comment type="function">
    <text evidence="1">Catalyzes the ATP-dependent phosphorylation of L-homoserine to L-homoserine phosphate.</text>
</comment>
<comment type="catalytic activity">
    <reaction evidence="1">
        <text>L-homoserine + ATP = O-phospho-L-homoserine + ADP + H(+)</text>
        <dbReference type="Rhea" id="RHEA:13985"/>
        <dbReference type="ChEBI" id="CHEBI:15378"/>
        <dbReference type="ChEBI" id="CHEBI:30616"/>
        <dbReference type="ChEBI" id="CHEBI:57476"/>
        <dbReference type="ChEBI" id="CHEBI:57590"/>
        <dbReference type="ChEBI" id="CHEBI:456216"/>
        <dbReference type="EC" id="2.7.1.39"/>
    </reaction>
</comment>
<comment type="pathway">
    <text evidence="1">Amino-acid biosynthesis; L-threonine biosynthesis; L-threonine from L-aspartate: step 4/5.</text>
</comment>
<comment type="subcellular location">
    <subcellularLocation>
        <location evidence="1">Cytoplasm</location>
    </subcellularLocation>
</comment>
<comment type="similarity">
    <text evidence="1">Belongs to the GHMP kinase family. Homoserine kinase subfamily.</text>
</comment>
<dbReference type="EC" id="2.7.1.39" evidence="1"/>
<dbReference type="EMBL" id="AE014075">
    <property type="protein sequence ID" value="AAN78504.1"/>
    <property type="molecule type" value="Genomic_DNA"/>
</dbReference>
<dbReference type="RefSeq" id="WP_000241663.1">
    <property type="nucleotide sequence ID" value="NZ_CP051263.1"/>
</dbReference>
<dbReference type="SMR" id="Q8FLD8"/>
<dbReference type="STRING" id="199310.c0004"/>
<dbReference type="KEGG" id="ecc:c0004"/>
<dbReference type="eggNOG" id="COG0083">
    <property type="taxonomic scope" value="Bacteria"/>
</dbReference>
<dbReference type="HOGENOM" id="CLU_041243_1_1_6"/>
<dbReference type="BioCyc" id="ECOL199310:C0004-MONOMER"/>
<dbReference type="UniPathway" id="UPA00050">
    <property type="reaction ID" value="UER00064"/>
</dbReference>
<dbReference type="Proteomes" id="UP000001410">
    <property type="component" value="Chromosome"/>
</dbReference>
<dbReference type="GO" id="GO:0005737">
    <property type="term" value="C:cytoplasm"/>
    <property type="evidence" value="ECO:0007669"/>
    <property type="project" value="UniProtKB-SubCell"/>
</dbReference>
<dbReference type="GO" id="GO:0005524">
    <property type="term" value="F:ATP binding"/>
    <property type="evidence" value="ECO:0007669"/>
    <property type="project" value="UniProtKB-UniRule"/>
</dbReference>
<dbReference type="GO" id="GO:0004413">
    <property type="term" value="F:homoserine kinase activity"/>
    <property type="evidence" value="ECO:0007669"/>
    <property type="project" value="UniProtKB-UniRule"/>
</dbReference>
<dbReference type="GO" id="GO:0009088">
    <property type="term" value="P:threonine biosynthetic process"/>
    <property type="evidence" value="ECO:0007669"/>
    <property type="project" value="UniProtKB-UniRule"/>
</dbReference>
<dbReference type="FunFam" id="3.30.230.10:FF:000020">
    <property type="entry name" value="Homoserine kinase"/>
    <property type="match status" value="1"/>
</dbReference>
<dbReference type="FunFam" id="3.30.70.890:FF:000002">
    <property type="entry name" value="Homoserine kinase"/>
    <property type="match status" value="1"/>
</dbReference>
<dbReference type="Gene3D" id="3.30.230.10">
    <property type="match status" value="1"/>
</dbReference>
<dbReference type="Gene3D" id="3.30.70.890">
    <property type="entry name" value="GHMP kinase, C-terminal domain"/>
    <property type="match status" value="1"/>
</dbReference>
<dbReference type="HAMAP" id="MF_00384">
    <property type="entry name" value="Homoser_kinase"/>
    <property type="match status" value="1"/>
</dbReference>
<dbReference type="InterPro" id="IPR013750">
    <property type="entry name" value="GHMP_kinase_C_dom"/>
</dbReference>
<dbReference type="InterPro" id="IPR036554">
    <property type="entry name" value="GHMP_kinase_C_sf"/>
</dbReference>
<dbReference type="InterPro" id="IPR006204">
    <property type="entry name" value="GHMP_kinase_N_dom"/>
</dbReference>
<dbReference type="InterPro" id="IPR006203">
    <property type="entry name" value="GHMP_knse_ATP-bd_CS"/>
</dbReference>
<dbReference type="InterPro" id="IPR000870">
    <property type="entry name" value="Homoserine_kinase"/>
</dbReference>
<dbReference type="InterPro" id="IPR020568">
    <property type="entry name" value="Ribosomal_Su5_D2-typ_SF"/>
</dbReference>
<dbReference type="InterPro" id="IPR014721">
    <property type="entry name" value="Ribsml_uS5_D2-typ_fold_subgr"/>
</dbReference>
<dbReference type="NCBIfam" id="NF002288">
    <property type="entry name" value="PRK01212.1-4"/>
    <property type="match status" value="1"/>
</dbReference>
<dbReference type="NCBIfam" id="TIGR00191">
    <property type="entry name" value="thrB"/>
    <property type="match status" value="1"/>
</dbReference>
<dbReference type="PANTHER" id="PTHR20861:SF1">
    <property type="entry name" value="HOMOSERINE KINASE"/>
    <property type="match status" value="1"/>
</dbReference>
<dbReference type="PANTHER" id="PTHR20861">
    <property type="entry name" value="HOMOSERINE/4-DIPHOSPHOCYTIDYL-2-C-METHYL-D-ERYTHRITOL KINASE"/>
    <property type="match status" value="1"/>
</dbReference>
<dbReference type="Pfam" id="PF08544">
    <property type="entry name" value="GHMP_kinases_C"/>
    <property type="match status" value="1"/>
</dbReference>
<dbReference type="Pfam" id="PF00288">
    <property type="entry name" value="GHMP_kinases_N"/>
    <property type="match status" value="1"/>
</dbReference>
<dbReference type="PIRSF" id="PIRSF000676">
    <property type="entry name" value="Homoser_kin"/>
    <property type="match status" value="1"/>
</dbReference>
<dbReference type="PRINTS" id="PR00958">
    <property type="entry name" value="HOMSERKINASE"/>
</dbReference>
<dbReference type="SUPFAM" id="SSF55060">
    <property type="entry name" value="GHMP Kinase, C-terminal domain"/>
    <property type="match status" value="1"/>
</dbReference>
<dbReference type="SUPFAM" id="SSF54211">
    <property type="entry name" value="Ribosomal protein S5 domain 2-like"/>
    <property type="match status" value="1"/>
</dbReference>
<dbReference type="PROSITE" id="PS00627">
    <property type="entry name" value="GHMP_KINASES_ATP"/>
    <property type="match status" value="1"/>
</dbReference>
<name>KHSE_ECOL6</name>
<gene>
    <name evidence="1" type="primary">thrB</name>
    <name type="ordered locus">c0004</name>
</gene>
<accession>Q8FLD8</accession>
<keyword id="KW-0028">Amino-acid biosynthesis</keyword>
<keyword id="KW-0067">ATP-binding</keyword>
<keyword id="KW-0963">Cytoplasm</keyword>
<keyword id="KW-0418">Kinase</keyword>
<keyword id="KW-0547">Nucleotide-binding</keyword>
<keyword id="KW-1185">Reference proteome</keyword>
<keyword id="KW-0791">Threonine biosynthesis</keyword>
<keyword id="KW-0808">Transferase</keyword>
<proteinExistence type="inferred from homology"/>
<sequence length="310" mass="33596">MVKVYAPASSANMSVGFDVLGAAVTPVDGALLGDVVTVEAAETFSLNNLGRFADKLPSEPRENIVYQCWERFCQELGKQIPVAMTLEKNMPIGSGLGSSACSVVAALMAMNEHCGKPLNDTRLLALMGELEGRISGSIHYDNVAPCFLGGMQLMIEENDIISQQVPGFDEWLWVLAYPGIKVSTAEARAILPAQYRRQDCIAHGRHLAGFIHACYSRQPELAANLMKDVIAEPYRERLLPGFRQARQAVAEIGAVASGISGSGPTLFALCDKPDTAQRVADWLGKNYLQNQEGFVHICRLDTAGARVLEN</sequence>
<feature type="chain" id="PRO_0000156568" description="Homoserine kinase">
    <location>
        <begin position="1"/>
        <end position="310"/>
    </location>
</feature>
<feature type="binding site" evidence="1">
    <location>
        <begin position="91"/>
        <end position="101"/>
    </location>
    <ligand>
        <name>ATP</name>
        <dbReference type="ChEBI" id="CHEBI:30616"/>
    </ligand>
</feature>
<evidence type="ECO:0000255" key="1">
    <source>
        <dbReference type="HAMAP-Rule" id="MF_00384"/>
    </source>
</evidence>